<sequence length="234" mass="25471">MFKTFIIAAVAVATVRAAVIGHDQVVPFAQPTPTSISQTTAVNFKPQLHITNGCHPYPAVDADGNTSGGLNPTGSSSAGCKGSGYGSQIYGRSAWYNGVWAIMYSWYFPKDSPSSGFGHRHDWEHIVVWLDNPAVASPKILAVSTSAHSGYTVYYPPNSNYLNGKSAKIDYYSILLINHAFRMTSDAGETQNLIMWDQMTDAARTALQNTDFGDANVPFKDGNFESKLANAWYQ</sequence>
<gene>
    <name evidence="6" type="primary">NLP10</name>
    <name evidence="5" type="synonym">NPP10</name>
    <name evidence="7" type="ORF">Pc11951</name>
</gene>
<evidence type="ECO:0000255" key="1"/>
<evidence type="ECO:0000255" key="2">
    <source>
        <dbReference type="PROSITE-ProRule" id="PRU00498"/>
    </source>
</evidence>
<evidence type="ECO:0000269" key="3">
    <source>
    </source>
</evidence>
<evidence type="ECO:0000269" key="4">
    <source>
    </source>
</evidence>
<evidence type="ECO:0000303" key="5">
    <source>
    </source>
</evidence>
<evidence type="ECO:0000303" key="6">
    <source>
    </source>
</evidence>
<evidence type="ECO:0000303" key="7">
    <source>
    </source>
</evidence>
<evidence type="ECO:0000305" key="8"/>
<evidence type="ECO:0000305" key="9">
    <source>
    </source>
</evidence>
<evidence type="ECO:0000305" key="10">
    <source>
    </source>
</evidence>
<evidence type="ECO:0000305" key="11">
    <source>
    </source>
</evidence>
<name>NLP10_PHYCP</name>
<proteinExistence type="evidence at transcript level"/>
<keyword id="KW-0325">Glycoprotein</keyword>
<keyword id="KW-0964">Secreted</keyword>
<keyword id="KW-0732">Signal</keyword>
<keyword id="KW-0843">Virulence</keyword>
<organism>
    <name type="scientific">Phytophthora capsici</name>
    <dbReference type="NCBI Taxonomy" id="4784"/>
    <lineage>
        <taxon>Eukaryota</taxon>
        <taxon>Sar</taxon>
        <taxon>Stramenopiles</taxon>
        <taxon>Oomycota</taxon>
        <taxon>Peronosporales</taxon>
        <taxon>Peronosporaceae</taxon>
        <taxon>Phytophthora</taxon>
    </lineage>
</organism>
<feature type="signal peptide" evidence="1">
    <location>
        <begin position="1"/>
        <end position="17"/>
    </location>
</feature>
<feature type="chain" id="PRO_5003982480" description="NLP effector protein 10">
    <location>
        <begin position="18"/>
        <end position="234"/>
    </location>
</feature>
<feature type="short sequence motif" description="Conserved undecapeptide motif I" evidence="11">
    <location>
        <begin position="101"/>
        <end position="111"/>
    </location>
</feature>
<feature type="short sequence motif" description="Hepta-peptide GHRHDWE motif II" evidence="10">
    <location>
        <begin position="118"/>
        <end position="124"/>
    </location>
</feature>
<feature type="glycosylation site" description="N-linked (GlcNAc...) asparagine" evidence="2">
    <location>
        <position position="65"/>
    </location>
</feature>
<accession>L7NCS1</accession>
<protein>
    <recommendedName>
        <fullName evidence="6">NLP effector protein 10</fullName>
    </recommendedName>
    <alternativeName>
        <fullName evidence="5">Necrosis-inducing protein 10</fullName>
    </alternativeName>
    <alternativeName>
        <fullName evidence="5">Nep1-like protein 10</fullName>
    </alternativeName>
</protein>
<reference key="1">
    <citation type="journal article" date="2011" name="Genet. Mol. Res.">
        <title>Identification of 18 genes encoding necrosis-inducing proteins from the plant pathogen Phytophthora capsici (Pythiaceae: Oomycetes).</title>
        <authorList>
            <person name="Feng B.Z."/>
            <person name="Li P.Q."/>
            <person name="Fu L."/>
            <person name="Sun B.B."/>
            <person name="Zhang X.G."/>
        </authorList>
    </citation>
    <scope>NUCLEOTIDE SEQUENCE [GENOMIC DNA]</scope>
    <scope>DOMAIN</scope>
</reference>
<reference key="2">
    <citation type="journal article" date="2014" name="BMC Plant Biol.">
        <title>Characterization of necrosis-inducing NLP proteins in Phytophthora capsici.</title>
        <authorList>
            <person name="Feng B.Z."/>
            <person name="Zhu X.P."/>
            <person name="Fu L."/>
            <person name="Lv R.F."/>
            <person name="Storey D."/>
            <person name="Tooley P."/>
            <person name="Zhang X.G."/>
        </authorList>
    </citation>
    <scope>INDUCTION</scope>
    <scope>FUNCTION</scope>
</reference>
<reference key="3">
    <citation type="journal article" date="2018" name="Mol. Genet. Genomics">
        <title>Identification and functional analysis of the NLP-encoding genes from the phytopathogenic oomycete Phytophthora capsici.</title>
        <authorList>
            <person name="Chen X.R."/>
            <person name="Huang S.X."/>
            <person name="Zhang Y."/>
            <person name="Sheng G.L."/>
            <person name="Li Y.P."/>
            <person name="Zhu F."/>
        </authorList>
    </citation>
    <scope>FUNCTION</scope>
    <scope>DOMAIN</scope>
    <scope>INDUCTION</scope>
</reference>
<comment type="function">
    <text evidence="3 4">Secreted effector that contributes moderately to virulence during infection by P.capsici (PubMed:24886309, PubMed:29572661). Does not cause visible reaction of C.annuum for several days after inoculation, but by 7 days after inoculation, small necrotic lesions become visible. Leads only to chlorotic areas, without necrosis at 7 days after non-host N.benthamiana leaves infection (PubMed:24886309, PubMed:29572661).</text>
</comment>
<comment type="subcellular location">
    <subcellularLocation>
        <location evidence="9">Secreted</location>
    </subcellularLocation>
</comment>
<comment type="induction">
    <text evidence="3 4">Expression reached the highest levels at 3 days after inoculation of pepper leaves, followed by a gradual decline.</text>
</comment>
<comment type="domain">
    <text evidence="11">Key residues/motif important for the effector activities are degenerated in most NLPs, including the nlp24 peptide consisting of the conserved region I (11-aa immunogenic part) and conserved region II (the heptapeptide GHRHDWE motif) that is important for phytotoxic activity.</text>
</comment>
<comment type="similarity">
    <text evidence="8">Belongs to the Necrosis inducing protein (NPP1) family.</text>
</comment>
<dbReference type="EMBL" id="HM543176">
    <property type="protein sequence ID" value="AEJ88241.1"/>
    <property type="molecule type" value="Genomic_DNA"/>
</dbReference>
<dbReference type="SMR" id="L7NCS1"/>
<dbReference type="GlyCosmos" id="L7NCS1">
    <property type="glycosylation" value="1 site, No reported glycans"/>
</dbReference>
<dbReference type="VEuPathDB" id="FungiDB:DVH05_022934"/>
<dbReference type="PHI-base" id="PHI:8053"/>
<dbReference type="GO" id="GO:0005576">
    <property type="term" value="C:extracellular region"/>
    <property type="evidence" value="ECO:0007669"/>
    <property type="project" value="UniProtKB-SubCell"/>
</dbReference>
<dbReference type="InterPro" id="IPR008701">
    <property type="entry name" value="NPP1"/>
</dbReference>
<dbReference type="PANTHER" id="PTHR33657">
    <property type="entry name" value="DOMAIN PROTEIN, PUTATIVE (AFU_ORTHOLOGUE AFUA_5G00600)-RELATED"/>
    <property type="match status" value="1"/>
</dbReference>
<dbReference type="PANTHER" id="PTHR33657:SF8">
    <property type="entry name" value="DOMAIN PROTEIN, PUTATIVE (AFU_ORTHOLOGUE AFUA_5G00600)-RELATED"/>
    <property type="match status" value="1"/>
</dbReference>
<dbReference type="Pfam" id="PF05630">
    <property type="entry name" value="NPP1"/>
    <property type="match status" value="1"/>
</dbReference>
<dbReference type="PIRSF" id="PIRSF029958">
    <property type="entry name" value="Necrosis-inducing_protein"/>
    <property type="match status" value="1"/>
</dbReference>